<protein>
    <recommendedName>
        <fullName>Putative acetyl-coenzyme A carboxylase carboxyl transferase subunit beta-like protein</fullName>
    </recommendedName>
</protein>
<geneLocation type="chloroplast"/>
<gene>
    <name type="primary">accD</name>
    <name type="synonym">ycf11</name>
    <name type="ORF">9311066</name>
</gene>
<reference key="1">
    <citation type="journal article" date="2004" name="Plant Physiol.">
        <title>A comparison of rice chloroplast genomes.</title>
        <authorList>
            <person name="Tang J."/>
            <person name="Xia H."/>
            <person name="Cao M."/>
            <person name="Zhang X."/>
            <person name="Zeng W."/>
            <person name="Hu S."/>
            <person name="Tong W."/>
            <person name="Wang J."/>
            <person name="Wang J."/>
            <person name="Yu J."/>
            <person name="Yang H."/>
            <person name="Zhu L."/>
        </authorList>
    </citation>
    <scope>NUCLEOTIDE SEQUENCE [LARGE SCALE GENOMIC DNA]</scope>
    <source>
        <strain>cv. 93-11</strain>
    </source>
</reference>
<comment type="subcellular location">
    <subcellularLocation>
        <location evidence="2">Plastid</location>
        <location evidence="2">Chloroplast stroma</location>
    </subcellularLocation>
</comment>
<comment type="similarity">
    <text evidence="2">Belongs to the AccD/PCCB family.</text>
</comment>
<comment type="caution">
    <text evidence="2">Could be the product of a pseudogene. Corresponds to the C-terminal part of other plant accD proteins.</text>
</comment>
<name>ACCD_ORYSI</name>
<proteinExistence type="uncertain"/>
<organism>
    <name type="scientific">Oryza sativa subsp. indica</name>
    <name type="common">Rice</name>
    <dbReference type="NCBI Taxonomy" id="39946"/>
    <lineage>
        <taxon>Eukaryota</taxon>
        <taxon>Viridiplantae</taxon>
        <taxon>Streptophyta</taxon>
        <taxon>Embryophyta</taxon>
        <taxon>Tracheophyta</taxon>
        <taxon>Spermatophyta</taxon>
        <taxon>Magnoliopsida</taxon>
        <taxon>Liliopsida</taxon>
        <taxon>Poales</taxon>
        <taxon>Poaceae</taxon>
        <taxon>BOP clade</taxon>
        <taxon>Oryzoideae</taxon>
        <taxon>Oryzeae</taxon>
        <taxon>Oryzinae</taxon>
        <taxon>Oryza</taxon>
        <taxon>Oryza sativa</taxon>
    </lineage>
</organism>
<sequence length="106" mass="12455">MALQSLRGSMRSVVGKRICPLIEYAIFPPLPRIIVYASRRARMQRGNYSLIKKPKKVSTLRQYQSTKSPMYQSLQRICGVREWLNKYCMWKEVDEKDFGFEIGAFD</sequence>
<dbReference type="EMBL" id="AY522329">
    <property type="protein sequence ID" value="AAS46062.1"/>
    <property type="molecule type" value="Genomic_DNA"/>
</dbReference>
<dbReference type="RefSeq" id="YP_009161373.1">
    <property type="nucleotide sequence ID" value="NC_027678.1"/>
</dbReference>
<dbReference type="RefSeq" id="YP_654222.1">
    <property type="nucleotide sequence ID" value="NC_008155.1"/>
</dbReference>
<dbReference type="SMR" id="P0C2Y3"/>
<dbReference type="STRING" id="39946.P0C2Y3"/>
<dbReference type="Proteomes" id="UP000007015">
    <property type="component" value="Chloroplast"/>
</dbReference>
<dbReference type="GO" id="GO:0009570">
    <property type="term" value="C:chloroplast stroma"/>
    <property type="evidence" value="ECO:0007669"/>
    <property type="project" value="UniProtKB-SubCell"/>
</dbReference>
<dbReference type="GO" id="GO:0009536">
    <property type="term" value="C:plastid"/>
    <property type="evidence" value="ECO:0000305"/>
    <property type="project" value="Gramene"/>
</dbReference>
<dbReference type="GO" id="GO:0005524">
    <property type="term" value="F:ATP binding"/>
    <property type="evidence" value="ECO:0007669"/>
    <property type="project" value="UniProtKB-KW"/>
</dbReference>
<dbReference type="GO" id="GO:0016874">
    <property type="term" value="F:ligase activity"/>
    <property type="evidence" value="ECO:0007669"/>
    <property type="project" value="UniProtKB-KW"/>
</dbReference>
<dbReference type="GO" id="GO:0006633">
    <property type="term" value="P:fatty acid biosynthetic process"/>
    <property type="evidence" value="ECO:0007669"/>
    <property type="project" value="UniProtKB-KW"/>
</dbReference>
<dbReference type="InterPro" id="IPR029045">
    <property type="entry name" value="ClpP/crotonase-like_dom_sf"/>
</dbReference>
<dbReference type="InterPro" id="IPR011762">
    <property type="entry name" value="COA_CT_N"/>
</dbReference>
<dbReference type="SUPFAM" id="SSF52096">
    <property type="entry name" value="ClpP/crotonase"/>
    <property type="match status" value="1"/>
</dbReference>
<dbReference type="PROSITE" id="PS50980">
    <property type="entry name" value="COA_CT_NTER"/>
    <property type="match status" value="1"/>
</dbReference>
<keyword id="KW-0067">ATP-binding</keyword>
<keyword id="KW-0150">Chloroplast</keyword>
<keyword id="KW-0275">Fatty acid biosynthesis</keyword>
<keyword id="KW-0276">Fatty acid metabolism</keyword>
<keyword id="KW-0436">Ligase</keyword>
<keyword id="KW-0444">Lipid biosynthesis</keyword>
<keyword id="KW-0443">Lipid metabolism</keyword>
<keyword id="KW-0547">Nucleotide-binding</keyword>
<keyword id="KW-0934">Plastid</keyword>
<keyword id="KW-1185">Reference proteome</keyword>
<evidence type="ECO:0000255" key="1">
    <source>
        <dbReference type="PROSITE-ProRule" id="PRU01136"/>
    </source>
</evidence>
<evidence type="ECO:0000305" key="2"/>
<accession>P0C2Y3</accession>
<accession>P12218</accession>
<accession>Q6QY67</accession>
<accession>Q7G7B5</accession>
<feature type="chain" id="PRO_0000288512" description="Putative acetyl-coenzyme A carboxylase carboxyl transferase subunit beta-like protein">
    <location>
        <begin position="1"/>
        <end position="106"/>
    </location>
</feature>
<feature type="domain" description="CoA carboxyltransferase N-terminal" evidence="1">
    <location>
        <begin position="1"/>
        <end position="106"/>
    </location>
</feature>